<proteinExistence type="inferred from homology"/>
<feature type="chain" id="PRO_1000073859" description="Argininosuccinate lyase">
    <location>
        <begin position="1"/>
        <end position="456"/>
    </location>
</feature>
<protein>
    <recommendedName>
        <fullName evidence="1">Argininosuccinate lyase</fullName>
        <shortName evidence="1">ASAL</shortName>
        <ecNumber evidence="1">4.3.2.1</ecNumber>
    </recommendedName>
    <alternativeName>
        <fullName evidence="1">Arginosuccinase</fullName>
    </alternativeName>
</protein>
<organism>
    <name type="scientific">Shewanella pealeana (strain ATCC 700345 / ANG-SQ1)</name>
    <dbReference type="NCBI Taxonomy" id="398579"/>
    <lineage>
        <taxon>Bacteria</taxon>
        <taxon>Pseudomonadati</taxon>
        <taxon>Pseudomonadota</taxon>
        <taxon>Gammaproteobacteria</taxon>
        <taxon>Alteromonadales</taxon>
        <taxon>Shewanellaceae</taxon>
        <taxon>Shewanella</taxon>
    </lineage>
</organism>
<reference key="1">
    <citation type="submission" date="2007-10" db="EMBL/GenBank/DDBJ databases">
        <title>Complete sequence of Shewanella pealeana ATCC 700345.</title>
        <authorList>
            <consortium name="US DOE Joint Genome Institute"/>
            <person name="Copeland A."/>
            <person name="Lucas S."/>
            <person name="Lapidus A."/>
            <person name="Barry K."/>
            <person name="Glavina del Rio T."/>
            <person name="Dalin E."/>
            <person name="Tice H."/>
            <person name="Pitluck S."/>
            <person name="Chertkov O."/>
            <person name="Brettin T."/>
            <person name="Bruce D."/>
            <person name="Detter J.C."/>
            <person name="Han C."/>
            <person name="Schmutz J."/>
            <person name="Larimer F."/>
            <person name="Land M."/>
            <person name="Hauser L."/>
            <person name="Kyrpides N."/>
            <person name="Kim E."/>
            <person name="Zhao J.-S.Z."/>
            <person name="Manno D."/>
            <person name="Hawari J."/>
            <person name="Richardson P."/>
        </authorList>
    </citation>
    <scope>NUCLEOTIDE SEQUENCE [LARGE SCALE GENOMIC DNA]</scope>
    <source>
        <strain>ATCC 700345 / ANG-SQ1</strain>
    </source>
</reference>
<name>ARLY_SHEPA</name>
<dbReference type="EC" id="4.3.2.1" evidence="1"/>
<dbReference type="EMBL" id="CP000851">
    <property type="protein sequence ID" value="ABV85559.1"/>
    <property type="molecule type" value="Genomic_DNA"/>
</dbReference>
<dbReference type="RefSeq" id="WP_012153500.1">
    <property type="nucleotide sequence ID" value="NC_009901.1"/>
</dbReference>
<dbReference type="SMR" id="A8GZ22"/>
<dbReference type="STRING" id="398579.Spea_0231"/>
<dbReference type="KEGG" id="spl:Spea_0231"/>
<dbReference type="eggNOG" id="COG0165">
    <property type="taxonomic scope" value="Bacteria"/>
</dbReference>
<dbReference type="HOGENOM" id="CLU_027272_2_3_6"/>
<dbReference type="OrthoDB" id="9769623at2"/>
<dbReference type="UniPathway" id="UPA00068">
    <property type="reaction ID" value="UER00114"/>
</dbReference>
<dbReference type="Proteomes" id="UP000002608">
    <property type="component" value="Chromosome"/>
</dbReference>
<dbReference type="GO" id="GO:0005829">
    <property type="term" value="C:cytosol"/>
    <property type="evidence" value="ECO:0007669"/>
    <property type="project" value="TreeGrafter"/>
</dbReference>
<dbReference type="GO" id="GO:0004056">
    <property type="term" value="F:argininosuccinate lyase activity"/>
    <property type="evidence" value="ECO:0007669"/>
    <property type="project" value="UniProtKB-UniRule"/>
</dbReference>
<dbReference type="GO" id="GO:0042450">
    <property type="term" value="P:arginine biosynthetic process via ornithine"/>
    <property type="evidence" value="ECO:0007669"/>
    <property type="project" value="InterPro"/>
</dbReference>
<dbReference type="GO" id="GO:0006526">
    <property type="term" value="P:L-arginine biosynthetic process"/>
    <property type="evidence" value="ECO:0007669"/>
    <property type="project" value="UniProtKB-UniRule"/>
</dbReference>
<dbReference type="CDD" id="cd01359">
    <property type="entry name" value="Argininosuccinate_lyase"/>
    <property type="match status" value="1"/>
</dbReference>
<dbReference type="FunFam" id="1.10.40.30:FF:000001">
    <property type="entry name" value="Argininosuccinate lyase"/>
    <property type="match status" value="1"/>
</dbReference>
<dbReference type="FunFam" id="1.20.200.10:FF:000006">
    <property type="entry name" value="Argininosuccinate lyase"/>
    <property type="match status" value="1"/>
</dbReference>
<dbReference type="Gene3D" id="1.10.40.30">
    <property type="entry name" value="Fumarase/aspartase (C-terminal domain)"/>
    <property type="match status" value="1"/>
</dbReference>
<dbReference type="Gene3D" id="1.20.200.10">
    <property type="entry name" value="Fumarase/aspartase (Central domain)"/>
    <property type="match status" value="1"/>
</dbReference>
<dbReference type="Gene3D" id="1.10.275.10">
    <property type="entry name" value="Fumarase/aspartase (N-terminal domain)"/>
    <property type="match status" value="1"/>
</dbReference>
<dbReference type="HAMAP" id="MF_00006">
    <property type="entry name" value="Arg_succ_lyase"/>
    <property type="match status" value="1"/>
</dbReference>
<dbReference type="InterPro" id="IPR029419">
    <property type="entry name" value="Arg_succ_lyase_C"/>
</dbReference>
<dbReference type="InterPro" id="IPR009049">
    <property type="entry name" value="Argininosuccinate_lyase"/>
</dbReference>
<dbReference type="InterPro" id="IPR024083">
    <property type="entry name" value="Fumarase/histidase_N"/>
</dbReference>
<dbReference type="InterPro" id="IPR020557">
    <property type="entry name" value="Fumarate_lyase_CS"/>
</dbReference>
<dbReference type="InterPro" id="IPR000362">
    <property type="entry name" value="Fumarate_lyase_fam"/>
</dbReference>
<dbReference type="InterPro" id="IPR022761">
    <property type="entry name" value="Fumarate_lyase_N"/>
</dbReference>
<dbReference type="InterPro" id="IPR008948">
    <property type="entry name" value="L-Aspartase-like"/>
</dbReference>
<dbReference type="NCBIfam" id="TIGR00838">
    <property type="entry name" value="argH"/>
    <property type="match status" value="1"/>
</dbReference>
<dbReference type="NCBIfam" id="NF008964">
    <property type="entry name" value="PRK12308.1"/>
    <property type="match status" value="1"/>
</dbReference>
<dbReference type="PANTHER" id="PTHR43814">
    <property type="entry name" value="ARGININOSUCCINATE LYASE"/>
    <property type="match status" value="1"/>
</dbReference>
<dbReference type="PANTHER" id="PTHR43814:SF1">
    <property type="entry name" value="ARGININOSUCCINATE LYASE"/>
    <property type="match status" value="1"/>
</dbReference>
<dbReference type="Pfam" id="PF14698">
    <property type="entry name" value="ASL_C2"/>
    <property type="match status" value="1"/>
</dbReference>
<dbReference type="Pfam" id="PF00206">
    <property type="entry name" value="Lyase_1"/>
    <property type="match status" value="1"/>
</dbReference>
<dbReference type="PRINTS" id="PR00145">
    <property type="entry name" value="ARGSUCLYASE"/>
</dbReference>
<dbReference type="PRINTS" id="PR00149">
    <property type="entry name" value="FUMRATELYASE"/>
</dbReference>
<dbReference type="SUPFAM" id="SSF48557">
    <property type="entry name" value="L-aspartase-like"/>
    <property type="match status" value="1"/>
</dbReference>
<dbReference type="PROSITE" id="PS00163">
    <property type="entry name" value="FUMARATE_LYASES"/>
    <property type="match status" value="1"/>
</dbReference>
<sequence length="456" mass="49787">MALWGGRFSQESSALFKLFNDSLPVDFRLIEQDIVGSIAWASAITQVGILTEKECTELHQALNELLAETQDSPELIIASGAEDIHSFVEQSLIAKVGDLGKKLHTGRSRNDQVATDLKLWCKKEGEQLLGLLANLRAALIGLAEREIDAVMPGYTHLQRAQPILFGHWCLAYVEMFERDISRLQDALKRADTCPLGTGALAGTAYPMDRVKLAKSLGFASPTLNSLDTVSDRDHVIEICSNASISMMHLSRMAEDLIFFNSGEAGFIELDDEVTSGSSLMPQKKNPDALELIRGKTGRVYGALMGILTTMKALPLAYNKDMQEDKEGLFDVMDSWSICLEMAALVLSGLQVNREKTLKAAKQGYANSTELADYLVAKGMPFREAHHVVGEAVVSAIAKQTPLEELTLVELQAFSAAIEADVYDCLTIESCLAKREALGGTSLSQVRNALATKKENC</sequence>
<accession>A8GZ22</accession>
<keyword id="KW-0028">Amino-acid biosynthesis</keyword>
<keyword id="KW-0055">Arginine biosynthesis</keyword>
<keyword id="KW-0963">Cytoplasm</keyword>
<keyword id="KW-0456">Lyase</keyword>
<keyword id="KW-1185">Reference proteome</keyword>
<gene>
    <name evidence="1" type="primary">argH</name>
    <name type="ordered locus">Spea_0231</name>
</gene>
<comment type="catalytic activity">
    <reaction evidence="1">
        <text>2-(N(omega)-L-arginino)succinate = fumarate + L-arginine</text>
        <dbReference type="Rhea" id="RHEA:24020"/>
        <dbReference type="ChEBI" id="CHEBI:29806"/>
        <dbReference type="ChEBI" id="CHEBI:32682"/>
        <dbReference type="ChEBI" id="CHEBI:57472"/>
        <dbReference type="EC" id="4.3.2.1"/>
    </reaction>
</comment>
<comment type="pathway">
    <text evidence="1">Amino-acid biosynthesis; L-arginine biosynthesis; L-arginine from L-ornithine and carbamoyl phosphate: step 3/3.</text>
</comment>
<comment type="subcellular location">
    <subcellularLocation>
        <location evidence="1">Cytoplasm</location>
    </subcellularLocation>
</comment>
<comment type="similarity">
    <text evidence="1">Belongs to the lyase 1 family. Argininosuccinate lyase subfamily.</text>
</comment>
<evidence type="ECO:0000255" key="1">
    <source>
        <dbReference type="HAMAP-Rule" id="MF_00006"/>
    </source>
</evidence>